<comment type="function">
    <text evidence="2">Part of an ABC transporter complex involved in ferric-petrobactin uptake. Probably responsible for energy coupling to the transport system.</text>
</comment>
<comment type="catalytic activity">
    <reaction evidence="5">
        <text>a Fe(III)-siderophore(out) + ATP + H2O = a Fe(III)-siderophore(in) + ADP + phosphate + H(+)</text>
        <dbReference type="Rhea" id="RHEA:15597"/>
        <dbReference type="Rhea" id="RHEA-COMP:11342"/>
        <dbReference type="ChEBI" id="CHEBI:15377"/>
        <dbReference type="ChEBI" id="CHEBI:15378"/>
        <dbReference type="ChEBI" id="CHEBI:29034"/>
        <dbReference type="ChEBI" id="CHEBI:30616"/>
        <dbReference type="ChEBI" id="CHEBI:43474"/>
        <dbReference type="ChEBI" id="CHEBI:456216"/>
    </reaction>
</comment>
<comment type="subunit">
    <text evidence="5">The complex is composed of two ATP-binding proteins (FpuC), two transmembrane proteins (FpuB) and a solute-binding protein (FpuA).</text>
</comment>
<comment type="subcellular location">
    <subcellularLocation>
        <location evidence="5">Cell membrane</location>
        <topology evidence="5">Peripheral membrane protein</topology>
        <orientation evidence="5">Cytoplasmic side</orientation>
    </subcellularLocation>
</comment>
<comment type="disruption phenotype">
    <text evidence="2">A mutant lacking fatE, fpuC and fpuD ATPases is deficient in petrobactin import in iron-depleted conditions.</text>
</comment>
<comment type="similarity">
    <text evidence="4">Belongs to the ABC transporter superfamily.</text>
</comment>
<name>FPUC_BACAN</name>
<protein>
    <recommendedName>
        <fullName evidence="4">Petrobactin import ATP-binding protein FpuC</fullName>
        <ecNumber evidence="5">7.2.2.-</ecNumber>
    </recommendedName>
</protein>
<keyword id="KW-0067">ATP-binding</keyword>
<keyword id="KW-1003">Cell membrane</keyword>
<keyword id="KW-0406">Ion transport</keyword>
<keyword id="KW-0408">Iron</keyword>
<keyword id="KW-0410">Iron transport</keyword>
<keyword id="KW-0472">Membrane</keyword>
<keyword id="KW-0547">Nucleotide-binding</keyword>
<keyword id="KW-1185">Reference proteome</keyword>
<keyword id="KW-1278">Translocase</keyword>
<keyword id="KW-0813">Transport</keyword>
<proteinExistence type="evidence at protein level"/>
<accession>Q81LM1</accession>
<accession>E9QQN5</accession>
<accession>E9QQN6</accession>
<accession>Q6HT27</accession>
<accession>Q6KMB6</accession>
<reference key="1">
    <citation type="journal article" date="2009" name="J. Bacteriol.">
        <title>The complete genome sequence of Bacillus anthracis Ames 'Ancestor'.</title>
        <authorList>
            <person name="Ravel J."/>
            <person name="Jiang L."/>
            <person name="Stanley S.T."/>
            <person name="Wilson M.R."/>
            <person name="Decker R.S."/>
            <person name="Read T.D."/>
            <person name="Worsham P."/>
            <person name="Keim P.S."/>
            <person name="Salzberg S.L."/>
            <person name="Fraser-Liggett C.M."/>
            <person name="Rasko D.A."/>
        </authorList>
    </citation>
    <scope>NUCLEOTIDE SEQUENCE [LARGE SCALE GENOMIC DNA]</scope>
    <source>
        <strain>Ames ancestor</strain>
    </source>
</reference>
<reference key="2">
    <citation type="journal article" date="2012" name="Mol. Microbiol.">
        <title>Multiple ABC transporters are involved in the acquisition of petrobactin in Bacillus anthracis.</title>
        <authorList>
            <person name="Dixon S.D."/>
            <person name="Janes B.K."/>
            <person name="Bourgis A."/>
            <person name="Carlson P.E. Jr."/>
            <person name="Hanna P.C."/>
        </authorList>
    </citation>
    <scope>FUNCTION</scope>
    <scope>CATALYTIC ACTIVITY</scope>
    <scope>SUBUNIT</scope>
    <scope>SUBCELLULAR LOCATION</scope>
    <scope>DISRUPTION PHENOTYPE</scope>
    <source>
        <strain>Sterne</strain>
    </source>
</reference>
<feature type="chain" id="PRO_0000443818" description="Petrobactin import ATP-binding protein FpuC">
    <location>
        <begin position="1"/>
        <end position="272"/>
    </location>
</feature>
<feature type="domain" description="ABC transporter" evidence="1">
    <location>
        <begin position="2"/>
        <end position="238"/>
    </location>
</feature>
<feature type="binding site" evidence="1">
    <location>
        <begin position="34"/>
        <end position="41"/>
    </location>
    <ligand>
        <name>ATP</name>
        <dbReference type="ChEBI" id="CHEBI:30616"/>
    </ligand>
</feature>
<dbReference type="EC" id="7.2.2.-" evidence="5"/>
<dbReference type="EMBL" id="AE017334">
    <property type="protein sequence ID" value="AAT33716.1"/>
    <property type="molecule type" value="Genomic_DNA"/>
</dbReference>
<dbReference type="RefSeq" id="WP_000626544.1">
    <property type="nucleotide sequence ID" value="NZ_WXXJ01000027.1"/>
</dbReference>
<dbReference type="SMR" id="Q81LM1"/>
<dbReference type="STRING" id="261594.GBAA_4595"/>
<dbReference type="DNASU" id="1088621"/>
<dbReference type="GeneID" id="45024240"/>
<dbReference type="KEGG" id="bar:GBAA_4595"/>
<dbReference type="PATRIC" id="fig|1392.230.peg.4533"/>
<dbReference type="HOGENOM" id="CLU_000604_1_11_9"/>
<dbReference type="OMA" id="RCWIAMA"/>
<dbReference type="OrthoDB" id="9787851at2"/>
<dbReference type="Proteomes" id="UP000000594">
    <property type="component" value="Chromosome"/>
</dbReference>
<dbReference type="GO" id="GO:0005886">
    <property type="term" value="C:plasma membrane"/>
    <property type="evidence" value="ECO:0007669"/>
    <property type="project" value="UniProtKB-SubCell"/>
</dbReference>
<dbReference type="GO" id="GO:0005524">
    <property type="term" value="F:ATP binding"/>
    <property type="evidence" value="ECO:0007669"/>
    <property type="project" value="UniProtKB-KW"/>
</dbReference>
<dbReference type="GO" id="GO:0016887">
    <property type="term" value="F:ATP hydrolysis activity"/>
    <property type="evidence" value="ECO:0007669"/>
    <property type="project" value="InterPro"/>
</dbReference>
<dbReference type="GO" id="GO:0006826">
    <property type="term" value="P:iron ion transport"/>
    <property type="evidence" value="ECO:0007669"/>
    <property type="project" value="UniProtKB-KW"/>
</dbReference>
<dbReference type="CDD" id="cd03214">
    <property type="entry name" value="ABC_Iron-Siderophores_B12_Hemin"/>
    <property type="match status" value="1"/>
</dbReference>
<dbReference type="FunFam" id="3.40.50.300:FF:000134">
    <property type="entry name" value="Iron-enterobactin ABC transporter ATP-binding protein"/>
    <property type="match status" value="1"/>
</dbReference>
<dbReference type="Gene3D" id="3.40.50.300">
    <property type="entry name" value="P-loop containing nucleotide triphosphate hydrolases"/>
    <property type="match status" value="1"/>
</dbReference>
<dbReference type="InterPro" id="IPR003593">
    <property type="entry name" value="AAA+_ATPase"/>
</dbReference>
<dbReference type="InterPro" id="IPR003439">
    <property type="entry name" value="ABC_transporter-like_ATP-bd"/>
</dbReference>
<dbReference type="InterPro" id="IPR017871">
    <property type="entry name" value="ABC_transporter-like_CS"/>
</dbReference>
<dbReference type="InterPro" id="IPR027417">
    <property type="entry name" value="P-loop_NTPase"/>
</dbReference>
<dbReference type="InterPro" id="IPR051535">
    <property type="entry name" value="Siderophore_ABC-ATPase"/>
</dbReference>
<dbReference type="PANTHER" id="PTHR42771:SF11">
    <property type="entry name" value="FERRICHROME TRANSPORT ATP-BINDING PROTEIN FHUC"/>
    <property type="match status" value="1"/>
</dbReference>
<dbReference type="PANTHER" id="PTHR42771">
    <property type="entry name" value="IRON(3+)-HYDROXAMATE IMPORT ATP-BINDING PROTEIN FHUC"/>
    <property type="match status" value="1"/>
</dbReference>
<dbReference type="Pfam" id="PF00005">
    <property type="entry name" value="ABC_tran"/>
    <property type="match status" value="1"/>
</dbReference>
<dbReference type="SMART" id="SM00382">
    <property type="entry name" value="AAA"/>
    <property type="match status" value="1"/>
</dbReference>
<dbReference type="SUPFAM" id="SSF52540">
    <property type="entry name" value="P-loop containing nucleoside triphosphate hydrolases"/>
    <property type="match status" value="1"/>
</dbReference>
<dbReference type="PROSITE" id="PS00211">
    <property type="entry name" value="ABC_TRANSPORTER_1"/>
    <property type="match status" value="1"/>
</dbReference>
<dbReference type="PROSITE" id="PS50893">
    <property type="entry name" value="ABC_TRANSPORTER_2"/>
    <property type="match status" value="1"/>
</dbReference>
<gene>
    <name evidence="3" type="primary">fpuC</name>
    <name evidence="6" type="ordered locus">GBAA_4595</name>
</gene>
<sequence length="272" mass="30996">MISVNKVFYAHSERFQMQNMNVHIKAGEVVSLIGPNGSGKSTLLRLMARLLKQSEGDIVLDGKSIHTMKSADVAKQLAMLPQMHDHQLDLTVKELIEFGRGPHKSWRGRLNKEDEEIVDWALSVTNLEGYEYRLLQSLSGGERQRAWIAMTLAQRTNVLLLDEPTTFLDIVHQLEVMELVKRLNEEFGMTIIMVLHDINQAAQYSDRLLVLKRGKLQYDGVPEEVLCHEMFQHIFGIEVDIFQGSEKPFFTPKRISKKGGAKCEQKNVLPLS</sequence>
<evidence type="ECO:0000255" key="1">
    <source>
        <dbReference type="PROSITE-ProRule" id="PRU00434"/>
    </source>
</evidence>
<evidence type="ECO:0000269" key="2">
    <source>
    </source>
</evidence>
<evidence type="ECO:0000303" key="3">
    <source>
    </source>
</evidence>
<evidence type="ECO:0000305" key="4"/>
<evidence type="ECO:0000305" key="5">
    <source>
    </source>
</evidence>
<evidence type="ECO:0000312" key="6">
    <source>
        <dbReference type="EMBL" id="AAT33716.1"/>
    </source>
</evidence>
<organism>
    <name type="scientific">Bacillus anthracis</name>
    <dbReference type="NCBI Taxonomy" id="1392"/>
    <lineage>
        <taxon>Bacteria</taxon>
        <taxon>Bacillati</taxon>
        <taxon>Bacillota</taxon>
        <taxon>Bacilli</taxon>
        <taxon>Bacillales</taxon>
        <taxon>Bacillaceae</taxon>
        <taxon>Bacillus</taxon>
        <taxon>Bacillus cereus group</taxon>
    </lineage>
</organism>